<accession>A1D911</accession>
<sequence>MSKLQQFPLSKGWSFRDSEDTSEDAWMPVPVVPSVVHQDLQANSKLKDPYIGFNELEARWVNEKSWTYKTVFQKPAAPAGSCIVLAFDGLDTFAKVKLDGNVILENDNMFLARRVDVTKALEAEGDHVLEIDFDCAFLRAKELRKQDPKHNWASFNGDPSRLSVRKAQYHWGWDWGPVLMTAGIWRDVRLEVYSARVADLWTEVQLASDHQSAQVTAFAEVESVHSGSHRACFTLSLHGQEIAREEIGVTENGTAKATFDVKEPSLWWPHGYGDATLYEVSVSLRKEQEELHKVSKKFGIRTAEVVQRPDKHGKSFFFRVNGVDIFCGGSCWIPADNLLPSITAERYRKWIELMVHGRQVMIRVWGGGIYEDNSFYDACDELGVLVWQDFMFGCGNYPTWPNLLESIRKESVYNVRRLRHHPSIVIWVGNNEDYQVQEQAGLTYNYEDKDPESWLKTDFPARYIYEKLLPEVVQEFSPSTFYHPGSPWGDGKTTSDPTVGDMHQWNVWHGTQEKYQIFDTLGGRFNSEFGMEAFPHMSTIDYFVENEADKYPQSHVLDFHNKADGHERRIATYLVENLRTATDLETHIYLTQVVQAETMMFGYRGWRRQWGDERHCGGALLWQLNDCWPTISWAIVDYFLRPKPAFYAVARVLNPIAVGVRREHHDWSVTHAQPPKTSKFELWVASSRQQEVQGTVELRFLSVNTGLEVRERIVHENVSIVPNGTTNLIVDGLIDHRVHSEPHVLAARIWVDGQLVARDVDWPQPFKYLDLSDRGLEIKKISESEDEQTLLISTQKPVKCLVFEEREGVRISDSAMDIVPGDDQRVTIKGLKPGDAPLKYKFLGQ</sequence>
<feature type="chain" id="PRO_0000394659" description="Beta-mannosidase B">
    <location>
        <begin position="1"/>
        <end position="845"/>
    </location>
</feature>
<feature type="region of interest" description="Disordered" evidence="3">
    <location>
        <begin position="1"/>
        <end position="20"/>
    </location>
</feature>
<feature type="active site" description="Proton donor" evidence="1">
    <location>
        <position position="432"/>
    </location>
</feature>
<feature type="glycosylation site" description="N-linked (GlcNAc...) asparagine" evidence="2">
    <location>
        <position position="252"/>
    </location>
</feature>
<feature type="glycosylation site" description="N-linked (GlcNAc...) asparagine" evidence="2">
    <location>
        <position position="717"/>
    </location>
</feature>
<feature type="glycosylation site" description="N-linked (GlcNAc...) asparagine" evidence="2">
    <location>
        <position position="723"/>
    </location>
</feature>
<evidence type="ECO:0000250" key="1"/>
<evidence type="ECO:0000255" key="2"/>
<evidence type="ECO:0000256" key="3">
    <source>
        <dbReference type="SAM" id="MobiDB-lite"/>
    </source>
</evidence>
<evidence type="ECO:0000305" key="4"/>
<organism>
    <name type="scientific">Neosartorya fischeri (strain ATCC 1020 / DSM 3700 / CBS 544.65 / FGSC A1164 / JCM 1740 / NRRL 181 / WB 181)</name>
    <name type="common">Aspergillus fischerianus</name>
    <dbReference type="NCBI Taxonomy" id="331117"/>
    <lineage>
        <taxon>Eukaryota</taxon>
        <taxon>Fungi</taxon>
        <taxon>Dikarya</taxon>
        <taxon>Ascomycota</taxon>
        <taxon>Pezizomycotina</taxon>
        <taxon>Eurotiomycetes</taxon>
        <taxon>Eurotiomycetidae</taxon>
        <taxon>Eurotiales</taxon>
        <taxon>Aspergillaceae</taxon>
        <taxon>Aspergillus</taxon>
        <taxon>Aspergillus subgen. Fumigati</taxon>
    </lineage>
</organism>
<gene>
    <name type="primary">mndB</name>
    <name type="ORF">NFIA_114030</name>
</gene>
<protein>
    <recommendedName>
        <fullName>Beta-mannosidase B</fullName>
        <ecNumber>3.2.1.25</ecNumber>
    </recommendedName>
    <alternativeName>
        <fullName>Mannanase B</fullName>
        <shortName>Mannase B</shortName>
    </alternativeName>
</protein>
<keyword id="KW-0119">Carbohydrate metabolism</keyword>
<keyword id="KW-0325">Glycoprotein</keyword>
<keyword id="KW-0326">Glycosidase</keyword>
<keyword id="KW-0378">Hydrolase</keyword>
<keyword id="KW-0624">Polysaccharide degradation</keyword>
<keyword id="KW-1185">Reference proteome</keyword>
<proteinExistence type="inferred from homology"/>
<name>MANBB_NEOFI</name>
<dbReference type="EC" id="3.2.1.25"/>
<dbReference type="EMBL" id="DS027692">
    <property type="protein sequence ID" value="EAW20872.1"/>
    <property type="molecule type" value="Genomic_DNA"/>
</dbReference>
<dbReference type="RefSeq" id="XP_001262769.1">
    <property type="nucleotide sequence ID" value="XM_001262768.1"/>
</dbReference>
<dbReference type="SMR" id="A1D911"/>
<dbReference type="STRING" id="331117.A1D911"/>
<dbReference type="GlyCosmos" id="A1D911">
    <property type="glycosylation" value="3 sites, No reported glycans"/>
</dbReference>
<dbReference type="EnsemblFungi" id="EAW20872">
    <property type="protein sequence ID" value="EAW20872"/>
    <property type="gene ID" value="NFIA_114030"/>
</dbReference>
<dbReference type="GeneID" id="4589289"/>
<dbReference type="KEGG" id="nfi:NFIA_114030"/>
<dbReference type="VEuPathDB" id="FungiDB:NFIA_114030"/>
<dbReference type="eggNOG" id="KOG2230">
    <property type="taxonomic scope" value="Eukaryota"/>
</dbReference>
<dbReference type="HOGENOM" id="CLU_005015_1_0_1"/>
<dbReference type="OMA" id="MFANFDY"/>
<dbReference type="OrthoDB" id="2866996at2759"/>
<dbReference type="UniPathway" id="UPA00280"/>
<dbReference type="Proteomes" id="UP000006702">
    <property type="component" value="Unassembled WGS sequence"/>
</dbReference>
<dbReference type="GO" id="GO:0004567">
    <property type="term" value="F:beta-mannosidase activity"/>
    <property type="evidence" value="ECO:0007669"/>
    <property type="project" value="UniProtKB-EC"/>
</dbReference>
<dbReference type="GO" id="GO:0006516">
    <property type="term" value="P:glycoprotein catabolic process"/>
    <property type="evidence" value="ECO:0007669"/>
    <property type="project" value="TreeGrafter"/>
</dbReference>
<dbReference type="GO" id="GO:0000272">
    <property type="term" value="P:polysaccharide catabolic process"/>
    <property type="evidence" value="ECO:0007669"/>
    <property type="project" value="UniProtKB-KW"/>
</dbReference>
<dbReference type="FunFam" id="2.60.120.260:FF:000118">
    <property type="entry name" value="Beta-mannosidase B"/>
    <property type="match status" value="1"/>
</dbReference>
<dbReference type="FunFam" id="3.20.20.80:FF:000050">
    <property type="entry name" value="Beta-mannosidase B"/>
    <property type="match status" value="1"/>
</dbReference>
<dbReference type="FunFam" id="2.60.40.10:FF:001725">
    <property type="entry name" value="Exo-beta-D-glucosaminidase"/>
    <property type="match status" value="1"/>
</dbReference>
<dbReference type="Gene3D" id="2.60.120.260">
    <property type="entry name" value="Galactose-binding domain-like"/>
    <property type="match status" value="1"/>
</dbReference>
<dbReference type="Gene3D" id="3.20.20.80">
    <property type="entry name" value="Glycosidases"/>
    <property type="match status" value="1"/>
</dbReference>
<dbReference type="Gene3D" id="2.60.40.10">
    <property type="entry name" value="Immunoglobulins"/>
    <property type="match status" value="1"/>
</dbReference>
<dbReference type="InterPro" id="IPR036156">
    <property type="entry name" value="Beta-gal/glucu_dom_sf"/>
</dbReference>
<dbReference type="InterPro" id="IPR054593">
    <property type="entry name" value="Beta-mannosidase-like_N2"/>
</dbReference>
<dbReference type="InterPro" id="IPR050887">
    <property type="entry name" value="Beta-mannosidase_GH2"/>
</dbReference>
<dbReference type="InterPro" id="IPR008979">
    <property type="entry name" value="Galactose-bd-like_sf"/>
</dbReference>
<dbReference type="InterPro" id="IPR006102">
    <property type="entry name" value="Glyco_hydro_2_Ig-like"/>
</dbReference>
<dbReference type="InterPro" id="IPR017853">
    <property type="entry name" value="Glycoside_hydrolase_SF"/>
</dbReference>
<dbReference type="InterPro" id="IPR013783">
    <property type="entry name" value="Ig-like_fold"/>
</dbReference>
<dbReference type="InterPro" id="IPR041447">
    <property type="entry name" value="Mannosidase_ig"/>
</dbReference>
<dbReference type="PANTHER" id="PTHR43730">
    <property type="entry name" value="BETA-MANNOSIDASE"/>
    <property type="match status" value="1"/>
</dbReference>
<dbReference type="PANTHER" id="PTHR43730:SF1">
    <property type="entry name" value="BETA-MANNOSIDASE"/>
    <property type="match status" value="1"/>
</dbReference>
<dbReference type="Pfam" id="PF00703">
    <property type="entry name" value="Glyco_hydro_2"/>
    <property type="match status" value="1"/>
</dbReference>
<dbReference type="Pfam" id="PF22666">
    <property type="entry name" value="Glyco_hydro_2_N2"/>
    <property type="match status" value="1"/>
</dbReference>
<dbReference type="Pfam" id="PF17786">
    <property type="entry name" value="Mannosidase_ig"/>
    <property type="match status" value="1"/>
</dbReference>
<dbReference type="SUPFAM" id="SSF51445">
    <property type="entry name" value="(Trans)glycosidases"/>
    <property type="match status" value="1"/>
</dbReference>
<dbReference type="SUPFAM" id="SSF49303">
    <property type="entry name" value="beta-Galactosidase/glucuronidase domain"/>
    <property type="match status" value="2"/>
</dbReference>
<dbReference type="SUPFAM" id="SSF49785">
    <property type="entry name" value="Galactose-binding domain-like"/>
    <property type="match status" value="1"/>
</dbReference>
<reference key="1">
    <citation type="journal article" date="2008" name="PLoS Genet.">
        <title>Genomic islands in the pathogenic filamentous fungus Aspergillus fumigatus.</title>
        <authorList>
            <person name="Fedorova N.D."/>
            <person name="Khaldi N."/>
            <person name="Joardar V.S."/>
            <person name="Maiti R."/>
            <person name="Amedeo P."/>
            <person name="Anderson M.J."/>
            <person name="Crabtree J."/>
            <person name="Silva J.C."/>
            <person name="Badger J.H."/>
            <person name="Albarraq A."/>
            <person name="Angiuoli S."/>
            <person name="Bussey H."/>
            <person name="Bowyer P."/>
            <person name="Cotty P.J."/>
            <person name="Dyer P.S."/>
            <person name="Egan A."/>
            <person name="Galens K."/>
            <person name="Fraser-Liggett C.M."/>
            <person name="Haas B.J."/>
            <person name="Inman J.M."/>
            <person name="Kent R."/>
            <person name="Lemieux S."/>
            <person name="Malavazi I."/>
            <person name="Orvis J."/>
            <person name="Roemer T."/>
            <person name="Ronning C.M."/>
            <person name="Sundaram J.P."/>
            <person name="Sutton G."/>
            <person name="Turner G."/>
            <person name="Venter J.C."/>
            <person name="White O.R."/>
            <person name="Whitty B.R."/>
            <person name="Youngman P."/>
            <person name="Wolfe K.H."/>
            <person name="Goldman G.H."/>
            <person name="Wortman J.R."/>
            <person name="Jiang B."/>
            <person name="Denning D.W."/>
            <person name="Nierman W.C."/>
        </authorList>
    </citation>
    <scope>NUCLEOTIDE SEQUENCE [LARGE SCALE GENOMIC DNA]</scope>
    <source>
        <strain>ATCC 1020 / DSM 3700 / CBS 544.65 / FGSC A1164 / JCM 1740 / NRRL 181 / WB 181</strain>
    </source>
</reference>
<comment type="function">
    <text evidence="1">Exoglycosidase that cleaves the single beta-linked mannose residue from the non-reducing end of beta-mannosidic oligosaccharides of various complexity and length. Prefers mannobiose over mannotriose and has no activity against polymeric mannan. Is also severely restricted by galactosyl substitutions at the +1 subsite (By similarity).</text>
</comment>
<comment type="catalytic activity">
    <reaction>
        <text>Hydrolysis of terminal, non-reducing beta-D-mannose residues in beta-D-mannosides.</text>
        <dbReference type="EC" id="3.2.1.25"/>
    </reaction>
</comment>
<comment type="pathway">
    <text>Glycan metabolism; N-glycan degradation.</text>
</comment>
<comment type="miscellaneous">
    <text evidence="1">In contrast to clade A beta-mannosidases, which are likely secreted, clade B proteins appear to be intracellular.</text>
</comment>
<comment type="similarity">
    <text evidence="4">Belongs to the glycosyl hydrolase 2 family. Beta-mannosidase B subfamily.</text>
</comment>